<protein>
    <recommendedName>
        <fullName>Autoinducer 2 import system permease protein LsrD</fullName>
        <shortName>AI-2 import system permease protein LsrD</shortName>
    </recommendedName>
</protein>
<feature type="chain" id="PRO_0000351371" description="Autoinducer 2 import system permease protein LsrD">
    <location>
        <begin position="1"/>
        <end position="333"/>
    </location>
</feature>
<feature type="transmembrane region" description="Helical" evidence="2">
    <location>
        <begin position="7"/>
        <end position="27"/>
    </location>
</feature>
<feature type="transmembrane region" description="Helical" evidence="2">
    <location>
        <begin position="45"/>
        <end position="65"/>
    </location>
</feature>
<feature type="transmembrane region" description="Helical" evidence="2">
    <location>
        <begin position="70"/>
        <end position="90"/>
    </location>
</feature>
<feature type="transmembrane region" description="Helical" evidence="2">
    <location>
        <begin position="91"/>
        <end position="111"/>
    </location>
</feature>
<feature type="transmembrane region" description="Helical" evidence="2">
    <location>
        <begin position="118"/>
        <end position="138"/>
    </location>
</feature>
<feature type="transmembrane region" description="Helical" evidence="2">
    <location>
        <begin position="162"/>
        <end position="182"/>
    </location>
</feature>
<feature type="transmembrane region" description="Helical" evidence="2">
    <location>
        <begin position="212"/>
        <end position="232"/>
    </location>
</feature>
<feature type="transmembrane region" description="Helical" evidence="2">
    <location>
        <begin position="240"/>
        <end position="260"/>
    </location>
</feature>
<feature type="transmembrane region" description="Helical" evidence="2">
    <location>
        <begin position="261"/>
        <end position="281"/>
    </location>
</feature>
<feature type="transmembrane region" description="Helical" evidence="2">
    <location>
        <begin position="288"/>
        <end position="308"/>
    </location>
</feature>
<evidence type="ECO:0000250" key="1"/>
<evidence type="ECO:0000255" key="2"/>
<evidence type="ECO:0000305" key="3"/>
<name>LSRD_PHOLL</name>
<reference key="1">
    <citation type="journal article" date="2003" name="Nat. Biotechnol.">
        <title>The genome sequence of the entomopathogenic bacterium Photorhabdus luminescens.</title>
        <authorList>
            <person name="Duchaud E."/>
            <person name="Rusniok C."/>
            <person name="Frangeul L."/>
            <person name="Buchrieser C."/>
            <person name="Givaudan A."/>
            <person name="Taourit S."/>
            <person name="Bocs S."/>
            <person name="Boursaux-Eude C."/>
            <person name="Chandler M."/>
            <person name="Charles J.-F."/>
            <person name="Dassa E."/>
            <person name="Derose R."/>
            <person name="Derzelle S."/>
            <person name="Freyssinet G."/>
            <person name="Gaudriault S."/>
            <person name="Medigue C."/>
            <person name="Lanois A."/>
            <person name="Powell K."/>
            <person name="Siguier P."/>
            <person name="Vincent R."/>
            <person name="Wingate V."/>
            <person name="Zouine M."/>
            <person name="Glaser P."/>
            <person name="Boemare N."/>
            <person name="Danchin A."/>
            <person name="Kunst F."/>
        </authorList>
    </citation>
    <scope>NUCLEOTIDE SEQUENCE [LARGE SCALE GENOMIC DNA]</scope>
    <source>
        <strain>DSM 15139 / CIP 105565 / TT01</strain>
    </source>
</reference>
<comment type="function">
    <text evidence="1">Part of the ABC transporter complex LsrABCD involved in autoinducer 2 (AI-2) import. Probably responsible for the translocation of the substrate across the membrane (By similarity).</text>
</comment>
<comment type="subunit">
    <text evidence="1">The complex is composed of two ATP-binding proteins (LsrA), two transmembrane proteins (LsrC and LsrD) and a solute-binding protein (LsrB).</text>
</comment>
<comment type="subcellular location">
    <subcellularLocation>
        <location evidence="1">Cell inner membrane</location>
        <topology evidence="1">Multi-pass membrane protein</topology>
    </subcellularLocation>
</comment>
<comment type="similarity">
    <text evidence="3">Belongs to the binding-protein-dependent transport system permease family. AraH/RbsC subfamily.</text>
</comment>
<dbReference type="EMBL" id="BX571869">
    <property type="protein sequence ID" value="CAE15519.1"/>
    <property type="molecule type" value="Genomic_DNA"/>
</dbReference>
<dbReference type="RefSeq" id="WP_011147356.1">
    <property type="nucleotide sequence ID" value="NC_005126.1"/>
</dbReference>
<dbReference type="STRING" id="243265.plu3145"/>
<dbReference type="GeneID" id="48849404"/>
<dbReference type="KEGG" id="plu:plu3145"/>
<dbReference type="eggNOG" id="COG1172">
    <property type="taxonomic scope" value="Bacteria"/>
</dbReference>
<dbReference type="HOGENOM" id="CLU_028880_0_0_6"/>
<dbReference type="OrthoDB" id="192433at2"/>
<dbReference type="Proteomes" id="UP000002514">
    <property type="component" value="Chromosome"/>
</dbReference>
<dbReference type="GO" id="GO:0005886">
    <property type="term" value="C:plasma membrane"/>
    <property type="evidence" value="ECO:0007669"/>
    <property type="project" value="UniProtKB-SubCell"/>
</dbReference>
<dbReference type="GO" id="GO:0022857">
    <property type="term" value="F:transmembrane transporter activity"/>
    <property type="evidence" value="ECO:0007669"/>
    <property type="project" value="InterPro"/>
</dbReference>
<dbReference type="CDD" id="cd06579">
    <property type="entry name" value="TM_PBP1_transp_AraH_like"/>
    <property type="match status" value="1"/>
</dbReference>
<dbReference type="InterPro" id="IPR001851">
    <property type="entry name" value="ABC_transp_permease"/>
</dbReference>
<dbReference type="NCBIfam" id="NF011612">
    <property type="entry name" value="PRK15038.1"/>
    <property type="match status" value="1"/>
</dbReference>
<dbReference type="PANTHER" id="PTHR32196">
    <property type="entry name" value="ABC TRANSPORTER PERMEASE PROTEIN YPHD-RELATED-RELATED"/>
    <property type="match status" value="1"/>
</dbReference>
<dbReference type="PANTHER" id="PTHR32196:SF71">
    <property type="entry name" value="AUTOINDUCER 2 IMPORT SYSTEM PERMEASE PROTEIN LSRD"/>
    <property type="match status" value="1"/>
</dbReference>
<dbReference type="Pfam" id="PF02653">
    <property type="entry name" value="BPD_transp_2"/>
    <property type="match status" value="1"/>
</dbReference>
<gene>
    <name type="primary">lsrD</name>
    <name type="ordered locus">plu3145</name>
</gene>
<proteinExistence type="inferred from homology"/>
<accession>Q7N2D7</accession>
<sequence>MNIGQRYGWEFALAALLIIEILLFGIANPRMLDINILLLSTSDFICIGIVALPLTMVIVSGGIDISFGSTIGLCAISLGVMNQTGIPMAAAIPLTLLVGAICGIINAALILYTGINPLVITLGTLYLFGGSALLLSGISGATGYEGIGGFPPALTDFANLTLFGLPMPLMLFLLCVLICWLFMHRTHSGRNIFLIGQSSKVARYAAIPVARTLYLLYSLTGIASAIAAIVLVSYFGSARSDLGASFLMPAITAVVLGGANIYGGSGSIIGTALAILLIGYLQQGLQMAGVPSQVSSALAGALLIIAVVGRSISLHHHQIRDWIQRWRNQRLSS</sequence>
<keyword id="KW-0997">Cell inner membrane</keyword>
<keyword id="KW-1003">Cell membrane</keyword>
<keyword id="KW-0472">Membrane</keyword>
<keyword id="KW-1185">Reference proteome</keyword>
<keyword id="KW-0812">Transmembrane</keyword>
<keyword id="KW-1133">Transmembrane helix</keyword>
<keyword id="KW-0813">Transport</keyword>
<organism>
    <name type="scientific">Photorhabdus laumondii subsp. laumondii (strain DSM 15139 / CIP 105565 / TT01)</name>
    <name type="common">Photorhabdus luminescens subsp. laumondii</name>
    <dbReference type="NCBI Taxonomy" id="243265"/>
    <lineage>
        <taxon>Bacteria</taxon>
        <taxon>Pseudomonadati</taxon>
        <taxon>Pseudomonadota</taxon>
        <taxon>Gammaproteobacteria</taxon>
        <taxon>Enterobacterales</taxon>
        <taxon>Morganellaceae</taxon>
        <taxon>Photorhabdus</taxon>
    </lineage>
</organism>